<reference key="1">
    <citation type="journal article" date="2002" name="Mol. Biol. Evol.">
        <title>The plastid chromosome of Atropa belladonna and its comparison with that of Nicotiana tabacum: the role of RNA editing in generating divergence in the process of plant speciation.</title>
        <authorList>
            <person name="Schmitz-Linneweber C."/>
            <person name="Regel R."/>
            <person name="Du T.G."/>
            <person name="Hupfer H."/>
            <person name="Herrmann R.G."/>
            <person name="Maier R.M."/>
        </authorList>
    </citation>
    <scope>NUCLEOTIDE SEQUENCE [LARGE SCALE GENOMIC DNA]</scope>
    <source>
        <strain>cv. Ab5p(kan)</strain>
    </source>
</reference>
<geneLocation type="chloroplast"/>
<organism>
    <name type="scientific">Atropa belladonna</name>
    <name type="common">Belladonna</name>
    <name type="synonym">Deadly nightshade</name>
    <dbReference type="NCBI Taxonomy" id="33113"/>
    <lineage>
        <taxon>Eukaryota</taxon>
        <taxon>Viridiplantae</taxon>
        <taxon>Streptophyta</taxon>
        <taxon>Embryophyta</taxon>
        <taxon>Tracheophyta</taxon>
        <taxon>Spermatophyta</taxon>
        <taxon>Magnoliopsida</taxon>
        <taxon>eudicotyledons</taxon>
        <taxon>Gunneridae</taxon>
        <taxon>Pentapetalae</taxon>
        <taxon>asterids</taxon>
        <taxon>lamiids</taxon>
        <taxon>Solanales</taxon>
        <taxon>Solanaceae</taxon>
        <taxon>Solanoideae</taxon>
        <taxon>Hyoscyameae</taxon>
        <taxon>Atropa</taxon>
    </lineage>
</organism>
<name>RR3_ATRBE</name>
<keyword id="KW-0150">Chloroplast</keyword>
<keyword id="KW-0934">Plastid</keyword>
<keyword id="KW-0687">Ribonucleoprotein</keyword>
<keyword id="KW-0689">Ribosomal protein</keyword>
<keyword id="KW-0694">RNA-binding</keyword>
<keyword id="KW-0699">rRNA-binding</keyword>
<accession>Q8S8V5</accession>
<evidence type="ECO:0000250" key="1"/>
<evidence type="ECO:0000305" key="2"/>
<gene>
    <name type="primary">rps3</name>
</gene>
<proteinExistence type="inferred from homology"/>
<protein>
    <recommendedName>
        <fullName evidence="2">Small ribosomal subunit protein uS3c</fullName>
    </recommendedName>
    <alternativeName>
        <fullName>30S ribosomal protein S3, chloroplastic</fullName>
    </alternativeName>
</protein>
<dbReference type="EMBL" id="AJ316582">
    <property type="protein sequence ID" value="CAC88082.1"/>
    <property type="molecule type" value="Genomic_DNA"/>
</dbReference>
<dbReference type="RefSeq" id="NP_783269.1">
    <property type="nucleotide sequence ID" value="NC_004561.1"/>
</dbReference>
<dbReference type="SMR" id="Q8S8V5"/>
<dbReference type="GeneID" id="806526"/>
<dbReference type="GO" id="GO:0009507">
    <property type="term" value="C:chloroplast"/>
    <property type="evidence" value="ECO:0007669"/>
    <property type="project" value="UniProtKB-SubCell"/>
</dbReference>
<dbReference type="GO" id="GO:0022627">
    <property type="term" value="C:cytosolic small ribosomal subunit"/>
    <property type="evidence" value="ECO:0007669"/>
    <property type="project" value="TreeGrafter"/>
</dbReference>
<dbReference type="GO" id="GO:0019843">
    <property type="term" value="F:rRNA binding"/>
    <property type="evidence" value="ECO:0007669"/>
    <property type="project" value="UniProtKB-UniRule"/>
</dbReference>
<dbReference type="GO" id="GO:0003735">
    <property type="term" value="F:structural constituent of ribosome"/>
    <property type="evidence" value="ECO:0007669"/>
    <property type="project" value="InterPro"/>
</dbReference>
<dbReference type="GO" id="GO:0006412">
    <property type="term" value="P:translation"/>
    <property type="evidence" value="ECO:0007669"/>
    <property type="project" value="UniProtKB-UniRule"/>
</dbReference>
<dbReference type="CDD" id="cd02412">
    <property type="entry name" value="KH-II_30S_S3"/>
    <property type="match status" value="1"/>
</dbReference>
<dbReference type="FunFam" id="3.30.1140.32:FF:000003">
    <property type="entry name" value="30S ribosomal protein S3, chloroplastic"/>
    <property type="match status" value="1"/>
</dbReference>
<dbReference type="FunFam" id="3.30.300.20:FF:000008">
    <property type="entry name" value="30S ribosomal protein S3, chloroplastic"/>
    <property type="match status" value="1"/>
</dbReference>
<dbReference type="Gene3D" id="3.30.300.20">
    <property type="match status" value="1"/>
</dbReference>
<dbReference type="Gene3D" id="3.30.1140.32">
    <property type="entry name" value="Ribosomal protein S3, C-terminal domain"/>
    <property type="match status" value="1"/>
</dbReference>
<dbReference type="HAMAP" id="MF_01309_B">
    <property type="entry name" value="Ribosomal_uS3_B"/>
    <property type="match status" value="1"/>
</dbReference>
<dbReference type="InterPro" id="IPR015946">
    <property type="entry name" value="KH_dom-like_a/b"/>
</dbReference>
<dbReference type="InterPro" id="IPR004044">
    <property type="entry name" value="KH_dom_type_2"/>
</dbReference>
<dbReference type="InterPro" id="IPR009019">
    <property type="entry name" value="KH_sf_prok-type"/>
</dbReference>
<dbReference type="InterPro" id="IPR036419">
    <property type="entry name" value="Ribosomal_S3_C_sf"/>
</dbReference>
<dbReference type="InterPro" id="IPR005704">
    <property type="entry name" value="Ribosomal_uS3_bac-typ"/>
</dbReference>
<dbReference type="InterPro" id="IPR001351">
    <property type="entry name" value="Ribosomal_uS3_C"/>
</dbReference>
<dbReference type="InterPro" id="IPR018280">
    <property type="entry name" value="Ribosomal_uS3_CS"/>
</dbReference>
<dbReference type="NCBIfam" id="TIGR01009">
    <property type="entry name" value="rpsC_bact"/>
    <property type="match status" value="1"/>
</dbReference>
<dbReference type="PANTHER" id="PTHR11760">
    <property type="entry name" value="30S/40S RIBOSOMAL PROTEIN S3"/>
    <property type="match status" value="1"/>
</dbReference>
<dbReference type="PANTHER" id="PTHR11760:SF19">
    <property type="entry name" value="SMALL RIBOSOMAL SUBUNIT PROTEIN US3C"/>
    <property type="match status" value="1"/>
</dbReference>
<dbReference type="Pfam" id="PF00189">
    <property type="entry name" value="Ribosomal_S3_C"/>
    <property type="match status" value="1"/>
</dbReference>
<dbReference type="SUPFAM" id="SSF54814">
    <property type="entry name" value="Prokaryotic type KH domain (KH-domain type II)"/>
    <property type="match status" value="1"/>
</dbReference>
<dbReference type="SUPFAM" id="SSF54821">
    <property type="entry name" value="Ribosomal protein S3 C-terminal domain"/>
    <property type="match status" value="1"/>
</dbReference>
<dbReference type="PROSITE" id="PS50823">
    <property type="entry name" value="KH_TYPE_2"/>
    <property type="match status" value="1"/>
</dbReference>
<dbReference type="PROSITE" id="PS00548">
    <property type="entry name" value="RIBOSOMAL_S3"/>
    <property type="match status" value="1"/>
</dbReference>
<feature type="chain" id="PRO_0000130271" description="Small ribosomal subunit protein uS3c">
    <location>
        <begin position="1"/>
        <end position="218"/>
    </location>
</feature>
<feature type="domain" description="KH type-2">
    <location>
        <begin position="47"/>
        <end position="118"/>
    </location>
</feature>
<comment type="subunit">
    <text evidence="1">Part of the 30S ribosomal subunit.</text>
</comment>
<comment type="subcellular location">
    <subcellularLocation>
        <location>Plastid</location>
        <location>Chloroplast</location>
    </subcellularLocation>
</comment>
<comment type="similarity">
    <text evidence="2">Belongs to the universal ribosomal protein uS3 family.</text>
</comment>
<sequence>MGQKINPLGFRLGTTQGHHSLWFSQPKNYSEGLQEDQKIRDCIKNYVQKNMRTSSGVEGIARIEIQKRIDLIQVIIFMGFPKLLIESRPRGIEELQMTLQKELNCVNRKLNIAVTRIAKPYGNPNILAEFIAGQLKNRVSFRKAMKKAIELTEQADTKGIQIQIAGRIDGKEIARVEWIREGRVPLQTIRAKIDYCAYTVRTIYGVLGIKIWIFLDEE</sequence>